<organism>
    <name type="scientific">Listeria innocua serovar 6a (strain ATCC BAA-680 / CLIP 11262)</name>
    <dbReference type="NCBI Taxonomy" id="272626"/>
    <lineage>
        <taxon>Bacteria</taxon>
        <taxon>Bacillati</taxon>
        <taxon>Bacillota</taxon>
        <taxon>Bacilli</taxon>
        <taxon>Bacillales</taxon>
        <taxon>Listeriaceae</taxon>
        <taxon>Listeria</taxon>
    </lineage>
</organism>
<reference key="1">
    <citation type="journal article" date="2001" name="Science">
        <title>Comparative genomics of Listeria species.</title>
        <authorList>
            <person name="Glaser P."/>
            <person name="Frangeul L."/>
            <person name="Buchrieser C."/>
            <person name="Rusniok C."/>
            <person name="Amend A."/>
            <person name="Baquero F."/>
            <person name="Berche P."/>
            <person name="Bloecker H."/>
            <person name="Brandt P."/>
            <person name="Chakraborty T."/>
            <person name="Charbit A."/>
            <person name="Chetouani F."/>
            <person name="Couve E."/>
            <person name="de Daruvar A."/>
            <person name="Dehoux P."/>
            <person name="Domann E."/>
            <person name="Dominguez-Bernal G."/>
            <person name="Duchaud E."/>
            <person name="Durant L."/>
            <person name="Dussurget O."/>
            <person name="Entian K.-D."/>
            <person name="Fsihi H."/>
            <person name="Garcia-del Portillo F."/>
            <person name="Garrido P."/>
            <person name="Gautier L."/>
            <person name="Goebel W."/>
            <person name="Gomez-Lopez N."/>
            <person name="Hain T."/>
            <person name="Hauf J."/>
            <person name="Jackson D."/>
            <person name="Jones L.-M."/>
            <person name="Kaerst U."/>
            <person name="Kreft J."/>
            <person name="Kuhn M."/>
            <person name="Kunst F."/>
            <person name="Kurapkat G."/>
            <person name="Madueno E."/>
            <person name="Maitournam A."/>
            <person name="Mata Vicente J."/>
            <person name="Ng E."/>
            <person name="Nedjari H."/>
            <person name="Nordsiek G."/>
            <person name="Novella S."/>
            <person name="de Pablos B."/>
            <person name="Perez-Diaz J.-C."/>
            <person name="Purcell R."/>
            <person name="Remmel B."/>
            <person name="Rose M."/>
            <person name="Schlueter T."/>
            <person name="Simoes N."/>
            <person name="Tierrez A."/>
            <person name="Vazquez-Boland J.-A."/>
            <person name="Voss H."/>
            <person name="Wehland J."/>
            <person name="Cossart P."/>
        </authorList>
    </citation>
    <scope>NUCLEOTIDE SEQUENCE [LARGE SCALE GENOMIC DNA]</scope>
    <source>
        <strain>ATCC BAA-680 / CLIP 11262</strain>
    </source>
</reference>
<keyword id="KW-0479">Metal-binding</keyword>
<keyword id="KW-0687">Ribonucleoprotein</keyword>
<keyword id="KW-0689">Ribosomal protein</keyword>
<keyword id="KW-0694">RNA-binding</keyword>
<keyword id="KW-0699">rRNA-binding</keyword>
<keyword id="KW-0862">Zinc</keyword>
<sequence>MAKKSMIAKQKRTPKYAVQAYTRCERCGRPHSVIRKFKLCRICFRELAYKGQIPGVKKASW</sequence>
<name>RS14Z_LISIN</name>
<gene>
    <name evidence="1" type="primary">rpsZ</name>
    <name evidence="1" type="synonym">rpsN1</name>
    <name type="ordered locus">lin2768</name>
</gene>
<dbReference type="EMBL" id="AL596173">
    <property type="protein sequence ID" value="CAC97994.1"/>
    <property type="molecule type" value="Genomic_DNA"/>
</dbReference>
<dbReference type="PIR" id="AB1778">
    <property type="entry name" value="AB1778"/>
</dbReference>
<dbReference type="RefSeq" id="WP_003723684.1">
    <property type="nucleotide sequence ID" value="NC_003212.1"/>
</dbReference>
<dbReference type="SMR" id="P66402"/>
<dbReference type="STRING" id="272626.gene:17567155"/>
<dbReference type="KEGG" id="lin:rpsN"/>
<dbReference type="eggNOG" id="COG0199">
    <property type="taxonomic scope" value="Bacteria"/>
</dbReference>
<dbReference type="HOGENOM" id="CLU_139869_3_0_9"/>
<dbReference type="OrthoDB" id="9810484at2"/>
<dbReference type="Proteomes" id="UP000002513">
    <property type="component" value="Chromosome"/>
</dbReference>
<dbReference type="GO" id="GO:0015935">
    <property type="term" value="C:small ribosomal subunit"/>
    <property type="evidence" value="ECO:0007669"/>
    <property type="project" value="TreeGrafter"/>
</dbReference>
<dbReference type="GO" id="GO:0019843">
    <property type="term" value="F:rRNA binding"/>
    <property type="evidence" value="ECO:0007669"/>
    <property type="project" value="UniProtKB-UniRule"/>
</dbReference>
<dbReference type="GO" id="GO:0003735">
    <property type="term" value="F:structural constituent of ribosome"/>
    <property type="evidence" value="ECO:0007669"/>
    <property type="project" value="InterPro"/>
</dbReference>
<dbReference type="GO" id="GO:0008270">
    <property type="term" value="F:zinc ion binding"/>
    <property type="evidence" value="ECO:0007669"/>
    <property type="project" value="UniProtKB-UniRule"/>
</dbReference>
<dbReference type="GO" id="GO:0006412">
    <property type="term" value="P:translation"/>
    <property type="evidence" value="ECO:0007669"/>
    <property type="project" value="UniProtKB-UniRule"/>
</dbReference>
<dbReference type="FunFam" id="4.10.830.10:FF:000001">
    <property type="entry name" value="30S ribosomal protein S14 type Z"/>
    <property type="match status" value="1"/>
</dbReference>
<dbReference type="Gene3D" id="4.10.830.10">
    <property type="entry name" value="30s Ribosomal Protein S14, Chain N"/>
    <property type="match status" value="1"/>
</dbReference>
<dbReference type="HAMAP" id="MF_01364_B">
    <property type="entry name" value="Ribosomal_uS14_2_B"/>
    <property type="match status" value="1"/>
</dbReference>
<dbReference type="InterPro" id="IPR001209">
    <property type="entry name" value="Ribosomal_uS14"/>
</dbReference>
<dbReference type="InterPro" id="IPR023053">
    <property type="entry name" value="Ribosomal_uS14_bact"/>
</dbReference>
<dbReference type="InterPro" id="IPR018271">
    <property type="entry name" value="Ribosomal_uS14_CS"/>
</dbReference>
<dbReference type="InterPro" id="IPR043140">
    <property type="entry name" value="Ribosomal_uS14_sf"/>
</dbReference>
<dbReference type="NCBIfam" id="NF005974">
    <property type="entry name" value="PRK08061.1"/>
    <property type="match status" value="1"/>
</dbReference>
<dbReference type="PANTHER" id="PTHR19836">
    <property type="entry name" value="30S RIBOSOMAL PROTEIN S14"/>
    <property type="match status" value="1"/>
</dbReference>
<dbReference type="PANTHER" id="PTHR19836:SF26">
    <property type="entry name" value="SMALL RIBOSOMAL SUBUNIT PROTEIN US14B"/>
    <property type="match status" value="1"/>
</dbReference>
<dbReference type="Pfam" id="PF00253">
    <property type="entry name" value="Ribosomal_S14"/>
    <property type="match status" value="1"/>
</dbReference>
<dbReference type="SUPFAM" id="SSF57716">
    <property type="entry name" value="Glucocorticoid receptor-like (DNA-binding domain)"/>
    <property type="match status" value="1"/>
</dbReference>
<dbReference type="PROSITE" id="PS00527">
    <property type="entry name" value="RIBOSOMAL_S14"/>
    <property type="match status" value="1"/>
</dbReference>
<evidence type="ECO:0000255" key="1">
    <source>
        <dbReference type="HAMAP-Rule" id="MF_01364"/>
    </source>
</evidence>
<evidence type="ECO:0000305" key="2"/>
<protein>
    <recommendedName>
        <fullName evidence="1">Small ribosomal subunit protein uS14B</fullName>
    </recommendedName>
    <alternativeName>
        <fullName evidence="2">30S ribosomal protein S14 type Z</fullName>
    </alternativeName>
</protein>
<comment type="function">
    <text evidence="1">Binds 16S rRNA, required for the assembly of 30S particles and may also be responsible for determining the conformation of the 16S rRNA at the A site.</text>
</comment>
<comment type="cofactor">
    <cofactor evidence="1">
        <name>Zn(2+)</name>
        <dbReference type="ChEBI" id="CHEBI:29105"/>
    </cofactor>
    <text evidence="1">Binds 1 zinc ion per subunit.</text>
</comment>
<comment type="subunit">
    <text evidence="1">Part of the 30S ribosomal subunit. Contacts proteins S3 and S10.</text>
</comment>
<comment type="similarity">
    <text evidence="1">Belongs to the universal ribosomal protein uS14 family. Zinc-binding uS14 subfamily.</text>
</comment>
<proteinExistence type="inferred from homology"/>
<feature type="chain" id="PRO_0000130901" description="Small ribosomal subunit protein uS14B">
    <location>
        <begin position="1"/>
        <end position="61"/>
    </location>
</feature>
<feature type="binding site" evidence="1">
    <location>
        <position position="24"/>
    </location>
    <ligand>
        <name>Zn(2+)</name>
        <dbReference type="ChEBI" id="CHEBI:29105"/>
    </ligand>
</feature>
<feature type="binding site" evidence="1">
    <location>
        <position position="27"/>
    </location>
    <ligand>
        <name>Zn(2+)</name>
        <dbReference type="ChEBI" id="CHEBI:29105"/>
    </ligand>
</feature>
<feature type="binding site" evidence="1">
    <location>
        <position position="40"/>
    </location>
    <ligand>
        <name>Zn(2+)</name>
        <dbReference type="ChEBI" id="CHEBI:29105"/>
    </ligand>
</feature>
<feature type="binding site" evidence="1">
    <location>
        <position position="43"/>
    </location>
    <ligand>
        <name>Zn(2+)</name>
        <dbReference type="ChEBI" id="CHEBI:29105"/>
    </ligand>
</feature>
<accession>P66402</accession>
<accession>Q927M0</accession>